<evidence type="ECO:0000305" key="1"/>
<proteinExistence type="evidence at protein level"/>
<feature type="chain" id="PRO_0000448964" description="Unknown protein 1">
    <location>
        <begin position="1"/>
        <end position="7" status="greater than"/>
    </location>
</feature>
<feature type="non-terminal residue" evidence="1">
    <location>
        <position position="7"/>
    </location>
</feature>
<accession>C0HLM7</accession>
<organism>
    <name type="scientific">Elaeis guineensis var. tenera</name>
    <name type="common">Oil palm</name>
    <dbReference type="NCBI Taxonomy" id="51953"/>
    <lineage>
        <taxon>Eukaryota</taxon>
        <taxon>Viridiplantae</taxon>
        <taxon>Streptophyta</taxon>
        <taxon>Embryophyta</taxon>
        <taxon>Tracheophyta</taxon>
        <taxon>Spermatophyta</taxon>
        <taxon>Magnoliopsida</taxon>
        <taxon>Liliopsida</taxon>
        <taxon>Arecaceae</taxon>
        <taxon>Arecoideae</taxon>
        <taxon>Cocoseae</taxon>
        <taxon>Elaeidinae</taxon>
        <taxon>Elaeis</taxon>
    </lineage>
</organism>
<dbReference type="InParanoid" id="C0HLM7"/>
<dbReference type="Proteomes" id="UP000504607">
    <property type="component" value="Unplaced"/>
</dbReference>
<reference evidence="1" key="1">
    <citation type="submission" date="2019-10" db="UniProtKB">
        <title>Oil palm (Elaeis guineensis var. tenera) kernel globulin: Proteomic characterization.</title>
        <authorList>
            <person name="Tapal A."/>
            <person name="Martin A."/>
            <person name="Kaul Tiku P."/>
        </authorList>
    </citation>
    <scope>PROTEIN SEQUENCE</scope>
</reference>
<name>UP01_ELAGV</name>
<keyword id="KW-0903">Direct protein sequencing</keyword>
<keyword id="KW-1185">Reference proteome</keyword>
<sequence>STEQEDP</sequence>
<protein>
    <recommendedName>
        <fullName evidence="1">Unknown protein 1</fullName>
    </recommendedName>
</protein>